<proteinExistence type="evidence at protein level"/>
<name>YAFN_ECOLI</name>
<feature type="chain" id="PRO_0000168538" description="Antitoxin YafN">
    <location>
        <begin position="1"/>
        <end position="97"/>
    </location>
</feature>
<protein>
    <recommendedName>
        <fullName>Antitoxin YafN</fullName>
    </recommendedName>
</protein>
<comment type="function">
    <text evidence="2 3">Antitoxin component of a type II toxin-antitoxin (TA) system. Functions as an mRNA interferase antitoxin; overexpression prevents YafO-mediated cessation of cell growth and inhibition of cell proliferation.</text>
</comment>
<comment type="subunit">
    <text evidence="4">Probably forms a complex with the mRNA interferase YafO which inhibits the mRNA interferase activity.</text>
</comment>
<comment type="interaction">
    <interactant intactId="EBI-1114856">
        <id>Q47156</id>
    </interactant>
    <interactant intactId="EBI-1119355">
        <id>Q47157</id>
        <label>yafO</label>
    </interactant>
    <organismsDiffer>false</organismsDiffer>
    <experiments>2</experiments>
</comment>
<comment type="induction">
    <text evidence="1 3">Induced by amino acid starvation, glucose starvation, the DNA cross-linker mitomycin C (SOS response) and when translation is blocked. Induction is decreased in the absence of the Lon protease suggesting, by homology to other toxin-antitoxin systems, that Lon may degrade the YafN antitoxin. Transcription is negatively regulated by the cognate locus, probably by this protein. A member of the dinB-yafNOP operon; it has 2 promoters, 1 upstream of dinB and 1 specific for yafN-yfaO.</text>
</comment>
<comment type="similarity">
    <text evidence="4">Belongs to the phD/YefM antitoxin family.</text>
</comment>
<keyword id="KW-0227">DNA damage</keyword>
<keyword id="KW-0234">DNA repair</keyword>
<keyword id="KW-0238">DNA-binding</keyword>
<keyword id="KW-1185">Reference proteome</keyword>
<keyword id="KW-0678">Repressor</keyword>
<keyword id="KW-0742">SOS response</keyword>
<keyword id="KW-1277">Toxin-antitoxin system</keyword>
<keyword id="KW-0804">Transcription</keyword>
<keyword id="KW-0805">Transcription regulation</keyword>
<sequence length="97" mass="11234">MHRILAEKSVNITELRKNPAKYFIDQPVAVLSNNRPAGYLLSASAFEALMDMLAEQEEKKPIKARFRPSAARLEEITRRAEQYLNDMTDDDFNDFKE</sequence>
<reference key="1">
    <citation type="journal article" date="1995" name="Mutat. Res.">
        <title>dinP, a new gene in Escherichia coli, whose product shows similarities to UmuC and its homologues.</title>
        <authorList>
            <person name="Ohmori H."/>
            <person name="Hatada E."/>
            <person name="Qiao Y."/>
            <person name="Tsuji M."/>
            <person name="Fukuda R."/>
        </authorList>
    </citation>
    <scope>NUCLEOTIDE SEQUENCE [GENOMIC DNA]</scope>
    <source>
        <strain>K12 / W3110 / ATCC 27325 / DSM 5911</strain>
    </source>
</reference>
<reference key="2">
    <citation type="submission" date="1997-01" db="EMBL/GenBank/DDBJ databases">
        <title>Sequence of minutes 4-25 of Escherichia coli.</title>
        <authorList>
            <person name="Chung E."/>
            <person name="Allen E."/>
            <person name="Araujo R."/>
            <person name="Aparicio A.M."/>
            <person name="Davis K."/>
            <person name="Duncan M."/>
            <person name="Federspiel N."/>
            <person name="Hyman R."/>
            <person name="Kalman S."/>
            <person name="Komp C."/>
            <person name="Kurdi O."/>
            <person name="Lew H."/>
            <person name="Lin D."/>
            <person name="Namath A."/>
            <person name="Oefner P."/>
            <person name="Roberts D."/>
            <person name="Schramm S."/>
            <person name="Davis R.W."/>
        </authorList>
    </citation>
    <scope>NUCLEOTIDE SEQUENCE [LARGE SCALE GENOMIC DNA]</scope>
    <source>
        <strain>K12 / MG1655 / ATCC 47076</strain>
    </source>
</reference>
<reference key="3">
    <citation type="journal article" date="1997" name="Science">
        <title>The complete genome sequence of Escherichia coli K-12.</title>
        <authorList>
            <person name="Blattner F.R."/>
            <person name="Plunkett G. III"/>
            <person name="Bloch C.A."/>
            <person name="Perna N.T."/>
            <person name="Burland V."/>
            <person name="Riley M."/>
            <person name="Collado-Vides J."/>
            <person name="Glasner J.D."/>
            <person name="Rode C.K."/>
            <person name="Mayhew G.F."/>
            <person name="Gregor J."/>
            <person name="Davis N.W."/>
            <person name="Kirkpatrick H.A."/>
            <person name="Goeden M.A."/>
            <person name="Rose D.J."/>
            <person name="Mau B."/>
            <person name="Shao Y."/>
        </authorList>
    </citation>
    <scope>NUCLEOTIDE SEQUENCE [LARGE SCALE GENOMIC DNA]</scope>
    <source>
        <strain>K12 / MG1655 / ATCC 47076</strain>
    </source>
</reference>
<reference key="4">
    <citation type="journal article" date="2006" name="Mol. Syst. Biol.">
        <title>Highly accurate genome sequences of Escherichia coli K-12 strains MG1655 and W3110.</title>
        <authorList>
            <person name="Hayashi K."/>
            <person name="Morooka N."/>
            <person name="Yamamoto Y."/>
            <person name="Fujita K."/>
            <person name="Isono K."/>
            <person name="Choi S."/>
            <person name="Ohtsubo E."/>
            <person name="Baba T."/>
            <person name="Wanner B.L."/>
            <person name="Mori H."/>
            <person name="Horiuchi T."/>
        </authorList>
    </citation>
    <scope>NUCLEOTIDE SEQUENCE [LARGE SCALE GENOMIC DNA]</scope>
    <source>
        <strain>K12 / W3110 / ATCC 27325 / DSM 5911</strain>
    </source>
</reference>
<reference key="5">
    <citation type="journal article" date="2003" name="J. Bacteriol.">
        <title>The dinB operon and spontaneous mutation in Escherichia coli.</title>
        <authorList>
            <person name="McKenzie G.J."/>
            <person name="Magner D.B."/>
            <person name="Lee P.L."/>
            <person name="Rosenberg S.M."/>
        </authorList>
    </citation>
    <scope>SUGGESTION OF ANTITOXIN FUNCTION</scope>
    <scope>INDUCTION</scope>
    <scope>OPERON STRUCTURE</scope>
    <source>
        <strain>K12 / MG1655 / ATCC 47076</strain>
    </source>
</reference>
<reference key="6">
    <citation type="journal article" date="2009" name="J. Biol. Chem.">
        <title>Characterization of YafO, an Escherichia coli toxin.</title>
        <authorList>
            <person name="Zhang Y."/>
            <person name="Yamaguchi Y."/>
            <person name="Inouye M."/>
        </authorList>
    </citation>
    <scope>FUNCTION AS AN MRNA INTERFERASE ANTITOXIN</scope>
    <source>
        <strain>K12 / BW25113</strain>
    </source>
</reference>
<reference key="7">
    <citation type="journal article" date="2010" name="Mol. Microbiol.">
        <title>Three new RelE-homologous mRNA interferases of Escherichia coli differentially induced by environmental stresses.</title>
        <authorList>
            <person name="Christensen-Dalsgaard M."/>
            <person name="Jorgensen M.G."/>
            <person name="Gerdes K."/>
        </authorList>
    </citation>
    <scope>FUNCTION AS AN MRNA INTERFERASE ANTITOXIN</scope>
    <scope>INDUCTION</scope>
    <scope>OPERON STRUCTURE</scope>
    <source>
        <strain>K12 / MG1655 / ATCC 47076</strain>
    </source>
</reference>
<gene>
    <name type="primary">yafN</name>
    <name type="ordered locus">b0232</name>
    <name type="ordered locus">JW0222</name>
</gene>
<organism>
    <name type="scientific">Escherichia coli (strain K12)</name>
    <dbReference type="NCBI Taxonomy" id="83333"/>
    <lineage>
        <taxon>Bacteria</taxon>
        <taxon>Pseudomonadati</taxon>
        <taxon>Pseudomonadota</taxon>
        <taxon>Gammaproteobacteria</taxon>
        <taxon>Enterobacterales</taxon>
        <taxon>Enterobacteriaceae</taxon>
        <taxon>Escherichia</taxon>
    </lineage>
</organism>
<dbReference type="EMBL" id="D38582">
    <property type="protein sequence ID" value="BAA07594.1"/>
    <property type="molecule type" value="Genomic_DNA"/>
</dbReference>
<dbReference type="EMBL" id="U70214">
    <property type="protein sequence ID" value="AAB08652.1"/>
    <property type="molecule type" value="Genomic_DNA"/>
</dbReference>
<dbReference type="EMBL" id="U00096">
    <property type="protein sequence ID" value="AAC73336.1"/>
    <property type="molecule type" value="Genomic_DNA"/>
</dbReference>
<dbReference type="EMBL" id="AP009048">
    <property type="protein sequence ID" value="BAE76047.1"/>
    <property type="molecule type" value="Genomic_DNA"/>
</dbReference>
<dbReference type="PIR" id="A64748">
    <property type="entry name" value="A64748"/>
</dbReference>
<dbReference type="RefSeq" id="NP_414767.1">
    <property type="nucleotide sequence ID" value="NC_000913.3"/>
</dbReference>
<dbReference type="RefSeq" id="WP_000554758.1">
    <property type="nucleotide sequence ID" value="NZ_SSZK01000050.1"/>
</dbReference>
<dbReference type="SMR" id="Q47156"/>
<dbReference type="BioGRID" id="4259762">
    <property type="interactions" value="175"/>
</dbReference>
<dbReference type="ComplexPortal" id="CPX-6026">
    <property type="entry name" value="YafNO toxin-antitoxin complex"/>
</dbReference>
<dbReference type="FunCoup" id="Q47156">
    <property type="interactions" value="7"/>
</dbReference>
<dbReference type="IntAct" id="Q47156">
    <property type="interactions" value="3"/>
</dbReference>
<dbReference type="STRING" id="511145.b0232"/>
<dbReference type="jPOST" id="Q47156"/>
<dbReference type="PaxDb" id="511145-b0232"/>
<dbReference type="EnsemblBacteria" id="AAC73336">
    <property type="protein sequence ID" value="AAC73336"/>
    <property type="gene ID" value="b0232"/>
</dbReference>
<dbReference type="GeneID" id="75056215"/>
<dbReference type="GeneID" id="944920"/>
<dbReference type="KEGG" id="ecj:JW0222"/>
<dbReference type="KEGG" id="eco:b0232"/>
<dbReference type="KEGG" id="ecoc:C3026_01100"/>
<dbReference type="KEGG" id="ecoc:C3026_23840"/>
<dbReference type="PATRIC" id="fig|1411691.4.peg.2051"/>
<dbReference type="EchoBASE" id="EB2945"/>
<dbReference type="eggNOG" id="COG2161">
    <property type="taxonomic scope" value="Bacteria"/>
</dbReference>
<dbReference type="HOGENOM" id="CLU_2391108_0_0_6"/>
<dbReference type="InParanoid" id="Q47156"/>
<dbReference type="OMA" id="NNKPAGY"/>
<dbReference type="OrthoDB" id="5297687at2"/>
<dbReference type="PhylomeDB" id="Q47156"/>
<dbReference type="BioCyc" id="EcoCyc:G6116-MONOMER"/>
<dbReference type="PRO" id="PR:Q47156"/>
<dbReference type="Proteomes" id="UP000000625">
    <property type="component" value="Chromosome"/>
</dbReference>
<dbReference type="GO" id="GO:0110001">
    <property type="term" value="C:toxin-antitoxin complex"/>
    <property type="evidence" value="ECO:0000353"/>
    <property type="project" value="ComplexPortal"/>
</dbReference>
<dbReference type="GO" id="GO:0003700">
    <property type="term" value="F:DNA-binding transcription factor activity"/>
    <property type="evidence" value="ECO:0000318"/>
    <property type="project" value="GO_Central"/>
</dbReference>
<dbReference type="GO" id="GO:0043565">
    <property type="term" value="F:sequence-specific DNA binding"/>
    <property type="evidence" value="ECO:0000318"/>
    <property type="project" value="GO_Central"/>
</dbReference>
<dbReference type="GO" id="GO:0006974">
    <property type="term" value="P:DNA damage response"/>
    <property type="evidence" value="ECO:0000270"/>
    <property type="project" value="EcoliWiki"/>
</dbReference>
<dbReference type="GO" id="GO:0006281">
    <property type="term" value="P:DNA repair"/>
    <property type="evidence" value="ECO:0007669"/>
    <property type="project" value="UniProtKB-KW"/>
</dbReference>
<dbReference type="GO" id="GO:0006355">
    <property type="term" value="P:regulation of DNA-templated transcription"/>
    <property type="evidence" value="ECO:0000315"/>
    <property type="project" value="EcoCyc"/>
</dbReference>
<dbReference type="GO" id="GO:0040008">
    <property type="term" value="P:regulation of growth"/>
    <property type="evidence" value="ECO:0000303"/>
    <property type="project" value="ComplexPortal"/>
</dbReference>
<dbReference type="GO" id="GO:0009432">
    <property type="term" value="P:SOS response"/>
    <property type="evidence" value="ECO:0000303"/>
    <property type="project" value="ComplexPortal"/>
</dbReference>
<dbReference type="InterPro" id="IPR051405">
    <property type="entry name" value="phD/YefM_antitoxin"/>
</dbReference>
<dbReference type="InterPro" id="IPR036165">
    <property type="entry name" value="YefM-like_sf"/>
</dbReference>
<dbReference type="NCBIfam" id="NF007300">
    <property type="entry name" value="PRK09778.1"/>
    <property type="match status" value="1"/>
</dbReference>
<dbReference type="PANTHER" id="PTHR33713:SF10">
    <property type="entry name" value="ANTITOXIN YAFN"/>
    <property type="match status" value="1"/>
</dbReference>
<dbReference type="PANTHER" id="PTHR33713">
    <property type="entry name" value="ANTITOXIN YAFN-RELATED"/>
    <property type="match status" value="1"/>
</dbReference>
<dbReference type="SUPFAM" id="SSF143120">
    <property type="entry name" value="YefM-like"/>
    <property type="match status" value="1"/>
</dbReference>
<evidence type="ECO:0000269" key="1">
    <source>
    </source>
</evidence>
<evidence type="ECO:0000269" key="2">
    <source>
    </source>
</evidence>
<evidence type="ECO:0000269" key="3">
    <source>
    </source>
</evidence>
<evidence type="ECO:0000305" key="4"/>
<accession>Q47156</accession>
<accession>Q2MCF9</accession>